<sequence>MNYFDNKIDQFATYLQKRNNLDHIQFLQVRLGMQIIVGNFFKILVTYSISIFLSVFLFTLVTHLSYMLIRYNAHGAHAKSSILCYIQSILTFVFVPYFLINIDINFTYLLALSIIGLISVVIYAPAATKKQPIPIKLVKRKKYLSIIMYLLVLILSLIIHPFYAQFMLLGILVESITLLPIFFPKED</sequence>
<feature type="chain" id="PRO_1000083586" description="Accessory gene regulator protein B">
    <location>
        <begin position="1"/>
        <end position="187"/>
    </location>
</feature>
<feature type="transmembrane region" description="Helical" evidence="1">
    <location>
        <begin position="49"/>
        <end position="69"/>
    </location>
</feature>
<feature type="transmembrane region" description="Helical" evidence="1">
    <location>
        <begin position="82"/>
        <end position="102"/>
    </location>
</feature>
<feature type="transmembrane region" description="Helical" evidence="1">
    <location>
        <begin position="106"/>
        <end position="126"/>
    </location>
</feature>
<feature type="transmembrane region" description="Helical" evidence="1">
    <location>
        <begin position="144"/>
        <end position="164"/>
    </location>
</feature>
<feature type="transmembrane region" description="Helical" evidence="1">
    <location>
        <begin position="166"/>
        <end position="186"/>
    </location>
</feature>
<proteinExistence type="inferred from homology"/>
<dbReference type="EC" id="3.4.-.-" evidence="1"/>
<dbReference type="EMBL" id="CP000736">
    <property type="protein sequence ID" value="ABR52940.1"/>
    <property type="molecule type" value="Genomic_DNA"/>
</dbReference>
<dbReference type="MEROPS" id="C75.001"/>
<dbReference type="KEGG" id="sah:SaurJH1_2110"/>
<dbReference type="HOGENOM" id="CLU_098969_2_2_9"/>
<dbReference type="GO" id="GO:0005886">
    <property type="term" value="C:plasma membrane"/>
    <property type="evidence" value="ECO:0007669"/>
    <property type="project" value="UniProtKB-SubCell"/>
</dbReference>
<dbReference type="GO" id="GO:0008233">
    <property type="term" value="F:peptidase activity"/>
    <property type="evidence" value="ECO:0007669"/>
    <property type="project" value="UniProtKB-UniRule"/>
</dbReference>
<dbReference type="GO" id="GO:0006508">
    <property type="term" value="P:proteolysis"/>
    <property type="evidence" value="ECO:0007669"/>
    <property type="project" value="UniProtKB-KW"/>
</dbReference>
<dbReference type="GO" id="GO:0009372">
    <property type="term" value="P:quorum sensing"/>
    <property type="evidence" value="ECO:0007669"/>
    <property type="project" value="UniProtKB-UniRule"/>
</dbReference>
<dbReference type="HAMAP" id="MF_00784">
    <property type="entry name" value="AgrB"/>
    <property type="match status" value="1"/>
</dbReference>
<dbReference type="InterPro" id="IPR006741">
    <property type="entry name" value="AgrB"/>
</dbReference>
<dbReference type="Pfam" id="PF04647">
    <property type="entry name" value="AgrB"/>
    <property type="match status" value="1"/>
</dbReference>
<dbReference type="SMART" id="SM00793">
    <property type="entry name" value="AgrB"/>
    <property type="match status" value="1"/>
</dbReference>
<name>AGRB_STAA2</name>
<gene>
    <name evidence="1" type="primary">agrB</name>
    <name type="ordered locus">SaurJH1_2110</name>
</gene>
<protein>
    <recommendedName>
        <fullName evidence="1">Accessory gene regulator protein B</fullName>
        <ecNumber evidence="1">3.4.-.-</ecNumber>
    </recommendedName>
</protein>
<keyword id="KW-1003">Cell membrane</keyword>
<keyword id="KW-0378">Hydrolase</keyword>
<keyword id="KW-0472">Membrane</keyword>
<keyword id="KW-0645">Protease</keyword>
<keyword id="KW-0673">Quorum sensing</keyword>
<keyword id="KW-0812">Transmembrane</keyword>
<keyword id="KW-1133">Transmembrane helix</keyword>
<keyword id="KW-0843">Virulence</keyword>
<accession>A6U3C2</accession>
<organism>
    <name type="scientific">Staphylococcus aureus (strain JH1)</name>
    <dbReference type="NCBI Taxonomy" id="359787"/>
    <lineage>
        <taxon>Bacteria</taxon>
        <taxon>Bacillati</taxon>
        <taxon>Bacillota</taxon>
        <taxon>Bacilli</taxon>
        <taxon>Bacillales</taxon>
        <taxon>Staphylococcaceae</taxon>
        <taxon>Staphylococcus</taxon>
    </lineage>
</organism>
<reference key="1">
    <citation type="submission" date="2007-06" db="EMBL/GenBank/DDBJ databases">
        <title>Complete sequence of chromosome of Staphylococcus aureus subsp. aureus JH1.</title>
        <authorList>
            <consortium name="US DOE Joint Genome Institute"/>
            <person name="Copeland A."/>
            <person name="Lucas S."/>
            <person name="Lapidus A."/>
            <person name="Barry K."/>
            <person name="Detter J.C."/>
            <person name="Glavina del Rio T."/>
            <person name="Hammon N."/>
            <person name="Israni S."/>
            <person name="Dalin E."/>
            <person name="Tice H."/>
            <person name="Pitluck S."/>
            <person name="Chain P."/>
            <person name="Malfatti S."/>
            <person name="Shin M."/>
            <person name="Vergez L."/>
            <person name="Schmutz J."/>
            <person name="Larimer F."/>
            <person name="Land M."/>
            <person name="Hauser L."/>
            <person name="Kyrpides N."/>
            <person name="Ivanova N."/>
            <person name="Tomasz A."/>
            <person name="Richardson P."/>
        </authorList>
    </citation>
    <scope>NUCLEOTIDE SEQUENCE [LARGE SCALE GENOMIC DNA]</scope>
    <source>
        <strain>JH1</strain>
    </source>
</reference>
<comment type="function">
    <text evidence="1">Essential for the production of a quorum sensing system signal molecule, the autoinducing peptide (AIP). This quorum sensing system is responsible for the regulation of the expression of virulence factor genes. Involved in the proteolytic processing of AgrD, the precursor of AIP.</text>
</comment>
<comment type="subcellular location">
    <subcellularLocation>
        <location evidence="1">Cell membrane</location>
        <topology evidence="1">Multi-pass membrane protein</topology>
    </subcellularLocation>
</comment>
<comment type="similarity">
    <text evidence="1">Belongs to the AgrB family.</text>
</comment>
<evidence type="ECO:0000255" key="1">
    <source>
        <dbReference type="HAMAP-Rule" id="MF_00784"/>
    </source>
</evidence>